<proteinExistence type="evidence at transcript level"/>
<keyword id="KW-0012">Acyltransferase</keyword>
<keyword id="KW-0156">Chromatin regulator</keyword>
<keyword id="KW-0159">Chromosome partition</keyword>
<keyword id="KW-0333">Golgi apparatus</keyword>
<keyword id="KW-0472">Membrane</keyword>
<keyword id="KW-1185">Reference proteome</keyword>
<keyword id="KW-0808">Transferase</keyword>
<comment type="function">
    <text evidence="1">N-alpha-acetyltransferase that specifically mediates the acetylation of N-terminal residues of the transmembrane proteins, with a strong preference for N-termini facing the cytosol. Displays N-terminal acetyltransferase activity towards a range of N-terminal sequences including those starting with Met-Lys, Met-Val, Met-Ala and Met-Met. Required for normal chromosomal segregation during anaphase. May also show histone acetyltransferase activity; such results are however unclear in vivo and would require additional experimental evidences.</text>
</comment>
<comment type="catalytic activity">
    <reaction evidence="1">
        <text>N-terminal L-methionyl-[transmembrane protein] + acetyl-CoA = N-terminal N(alpha)-acetyl-L-methionyl-[transmembrane protein] + CoA + H(+)</text>
        <dbReference type="Rhea" id="RHEA:50604"/>
        <dbReference type="Rhea" id="RHEA-COMP:12745"/>
        <dbReference type="Rhea" id="RHEA-COMP:12746"/>
        <dbReference type="ChEBI" id="CHEBI:15378"/>
        <dbReference type="ChEBI" id="CHEBI:57287"/>
        <dbReference type="ChEBI" id="CHEBI:57288"/>
        <dbReference type="ChEBI" id="CHEBI:64731"/>
        <dbReference type="ChEBI" id="CHEBI:133414"/>
        <dbReference type="EC" id="2.3.1.259"/>
    </reaction>
</comment>
<comment type="catalytic activity">
    <reaction evidence="1">
        <text>L-lysyl-[protein] + acetyl-CoA = N(6)-acetyl-L-lysyl-[protein] + CoA + H(+)</text>
        <dbReference type="Rhea" id="RHEA:45948"/>
        <dbReference type="Rhea" id="RHEA-COMP:9752"/>
        <dbReference type="Rhea" id="RHEA-COMP:10731"/>
        <dbReference type="ChEBI" id="CHEBI:15378"/>
        <dbReference type="ChEBI" id="CHEBI:29969"/>
        <dbReference type="ChEBI" id="CHEBI:57287"/>
        <dbReference type="ChEBI" id="CHEBI:57288"/>
        <dbReference type="ChEBI" id="CHEBI:61930"/>
        <dbReference type="EC" id="2.3.1.48"/>
    </reaction>
</comment>
<comment type="subunit">
    <text evidence="1">Monomer and homodimer; monomer in presence of substrate and homodimer in its absence.</text>
</comment>
<comment type="subcellular location">
    <subcellularLocation>
        <location evidence="1">Golgi apparatus membrane</location>
        <topology evidence="1">Peripheral membrane protein</topology>
        <orientation evidence="1">Cytoplasmic side</orientation>
    </subcellularLocation>
    <text evidence="1">Probably forms a intramembrane hairpin-like structure in the membrane.</text>
</comment>
<comment type="similarity">
    <text evidence="3">Belongs to the acetyltransferase family. NAA60 subfamily.</text>
</comment>
<reference key="1">
    <citation type="submission" date="2007-03" db="EMBL/GenBank/DDBJ databases">
        <authorList>
            <consortium name="NIH - Zebrafish Gene Collection (ZGC) project"/>
        </authorList>
    </citation>
    <scope>NUCLEOTIDE SEQUENCE [LARGE SCALE MRNA]</scope>
    <source>
        <tissue>Embryo</tissue>
    </source>
</reference>
<protein>
    <recommendedName>
        <fullName>N-alpha-acetyltransferase 60</fullName>
        <ecNumber evidence="1">2.3.1.259</ecNumber>
    </recommendedName>
    <alternativeName>
        <fullName evidence="1">Histone acetyltransferase type B protein 4</fullName>
        <shortName evidence="1">HAT4</shortName>
        <ecNumber evidence="1">2.3.1.48</ecNumber>
    </alternativeName>
    <alternativeName>
        <fullName>N-acetyltransferase 15</fullName>
    </alternativeName>
    <alternativeName>
        <fullName>N-alpha-acetyltransferase F</fullName>
        <shortName>NatF</shortName>
    </alternativeName>
</protein>
<sequence>MTDVVPTTALSEIQLRLLCHDDIDRIKVLCGEWFPIEYPDSWYHDITSNKKFFSLAATFRGGIVGMIVAEIKSRTKVHKEDGDILASSFPVDTQVAYILSLGVVKEFRKHGIGSLLLDSLKEHISTTAQDHCKAIYLHVLTTNNTAIHFYENRDFKQHHYLPYYYSIRGVLKDGFTYVLYINGGHPPWTIFDYIHHIGSALASLSPCSIPQRIYRQAQNLLRSFLPWSGISSKSGIEYSRTM</sequence>
<accession>A3KPA3</accession>
<evidence type="ECO:0000250" key="1">
    <source>
        <dbReference type="UniProtKB" id="Q9H7X0"/>
    </source>
</evidence>
<evidence type="ECO:0000255" key="2">
    <source>
        <dbReference type="PROSITE-ProRule" id="PRU00532"/>
    </source>
</evidence>
<evidence type="ECO:0000305" key="3"/>
<feature type="chain" id="PRO_0000321569" description="N-alpha-acetyltransferase 60">
    <location>
        <begin position="1"/>
        <end position="242"/>
    </location>
</feature>
<feature type="topological domain" description="Cytoplasmic" evidence="1">
    <location>
        <begin position="1"/>
        <end position="192"/>
    </location>
</feature>
<feature type="intramembrane region" description="Helical" evidence="1">
    <location>
        <begin position="193"/>
        <end position="236"/>
    </location>
</feature>
<feature type="topological domain" description="Cytoplasmic" evidence="1">
    <location>
        <begin position="237"/>
        <end position="242"/>
    </location>
</feature>
<feature type="domain" description="N-acetyltransferase" evidence="2">
    <location>
        <begin position="13"/>
        <end position="182"/>
    </location>
</feature>
<feature type="region of interest" description="Required for homodimerization" evidence="1">
    <location>
        <begin position="162"/>
        <end position="173"/>
    </location>
</feature>
<feature type="active site" evidence="1">
    <location>
        <position position="97"/>
    </location>
</feature>
<feature type="active site" evidence="1">
    <location>
        <position position="138"/>
    </location>
</feature>
<feature type="binding site" evidence="1">
    <location>
        <position position="38"/>
    </location>
    <ligand>
        <name>substrate</name>
    </ligand>
</feature>
<feature type="binding site" evidence="1">
    <location>
        <position position="99"/>
    </location>
    <ligand>
        <name>substrate</name>
    </ligand>
</feature>
<feature type="binding site" evidence="1">
    <location>
        <begin position="101"/>
        <end position="103"/>
    </location>
    <ligand>
        <name>acetyl-CoA</name>
        <dbReference type="ChEBI" id="CHEBI:57288"/>
    </ligand>
</feature>
<feature type="binding site" evidence="1">
    <location>
        <begin position="109"/>
        <end position="114"/>
    </location>
    <ligand>
        <name>acetyl-CoA</name>
        <dbReference type="ChEBI" id="CHEBI:57288"/>
    </ligand>
</feature>
<feature type="binding site" evidence="1">
    <location>
        <position position="143"/>
    </location>
    <ligand>
        <name>acetyl-CoA</name>
        <dbReference type="ChEBI" id="CHEBI:57288"/>
    </ligand>
</feature>
<feature type="binding site" evidence="1">
    <location>
        <begin position="150"/>
        <end position="153"/>
    </location>
    <ligand>
        <name>acetyl-CoA</name>
        <dbReference type="ChEBI" id="CHEBI:57288"/>
    </ligand>
</feature>
<feature type="binding site" evidence="1">
    <location>
        <position position="165"/>
    </location>
    <ligand>
        <name>substrate</name>
    </ligand>
</feature>
<organism>
    <name type="scientific">Danio rerio</name>
    <name type="common">Zebrafish</name>
    <name type="synonym">Brachydanio rerio</name>
    <dbReference type="NCBI Taxonomy" id="7955"/>
    <lineage>
        <taxon>Eukaryota</taxon>
        <taxon>Metazoa</taxon>
        <taxon>Chordata</taxon>
        <taxon>Craniata</taxon>
        <taxon>Vertebrata</taxon>
        <taxon>Euteleostomi</taxon>
        <taxon>Actinopterygii</taxon>
        <taxon>Neopterygii</taxon>
        <taxon>Teleostei</taxon>
        <taxon>Ostariophysi</taxon>
        <taxon>Cypriniformes</taxon>
        <taxon>Danionidae</taxon>
        <taxon>Danioninae</taxon>
        <taxon>Danio</taxon>
    </lineage>
</organism>
<gene>
    <name type="primary">naa60</name>
    <name type="synonym">nat15</name>
    <name type="ORF">zgc:163109</name>
</gene>
<name>NAA60_DANRE</name>
<dbReference type="EC" id="2.3.1.259" evidence="1"/>
<dbReference type="EC" id="2.3.1.48" evidence="1"/>
<dbReference type="EMBL" id="BC134236">
    <property type="protein sequence ID" value="AAI34237.1"/>
    <property type="molecule type" value="mRNA"/>
</dbReference>
<dbReference type="RefSeq" id="NP_001076341.1">
    <property type="nucleotide sequence ID" value="NM_001082872.1"/>
</dbReference>
<dbReference type="SMR" id="A3KPA3"/>
<dbReference type="FunCoup" id="A3KPA3">
    <property type="interactions" value="2073"/>
</dbReference>
<dbReference type="STRING" id="7955.ENSDARP00000081428"/>
<dbReference type="PaxDb" id="7955-ENSDARP00000081428"/>
<dbReference type="Ensembl" id="ENSDART00000086994">
    <property type="protein sequence ID" value="ENSDARP00000081428"/>
    <property type="gene ID" value="ENSDARG00000061185"/>
</dbReference>
<dbReference type="GeneID" id="570640"/>
<dbReference type="KEGG" id="dre:570640"/>
<dbReference type="AGR" id="ZFIN:ZDB-GENE-041111-143"/>
<dbReference type="CTD" id="79903"/>
<dbReference type="ZFIN" id="ZDB-GENE-041111-143">
    <property type="gene designation" value="naa60"/>
</dbReference>
<dbReference type="eggNOG" id="KOG3138">
    <property type="taxonomic scope" value="Eukaryota"/>
</dbReference>
<dbReference type="HOGENOM" id="CLU_013985_5_4_1"/>
<dbReference type="InParanoid" id="A3KPA3"/>
<dbReference type="OMA" id="IHFYKKM"/>
<dbReference type="OrthoDB" id="47017at2759"/>
<dbReference type="PhylomeDB" id="A3KPA3"/>
<dbReference type="TreeFam" id="TF323980"/>
<dbReference type="PRO" id="PR:A3KPA3"/>
<dbReference type="Proteomes" id="UP000000437">
    <property type="component" value="Chromosome 3"/>
</dbReference>
<dbReference type="Bgee" id="ENSDARG00000061185">
    <property type="expression patterns" value="Expressed in mature ovarian follicle and 28 other cell types or tissues"/>
</dbReference>
<dbReference type="GO" id="GO:0000139">
    <property type="term" value="C:Golgi membrane"/>
    <property type="evidence" value="ECO:0000250"/>
    <property type="project" value="UniProtKB"/>
</dbReference>
<dbReference type="GO" id="GO:0004402">
    <property type="term" value="F:histone acetyltransferase activity"/>
    <property type="evidence" value="ECO:0000318"/>
    <property type="project" value="GO_Central"/>
</dbReference>
<dbReference type="GO" id="GO:0010485">
    <property type="term" value="F:histone H4 acetyltransferase activity"/>
    <property type="evidence" value="ECO:0000250"/>
    <property type="project" value="UniProtKB"/>
</dbReference>
<dbReference type="GO" id="GO:0042803">
    <property type="term" value="F:protein homodimerization activity"/>
    <property type="evidence" value="ECO:0000250"/>
    <property type="project" value="UniProtKB"/>
</dbReference>
<dbReference type="GO" id="GO:0120518">
    <property type="term" value="F:protein N-terminal-methionine acetyltransferase activity"/>
    <property type="evidence" value="ECO:0007669"/>
    <property type="project" value="UniProtKB-EC"/>
</dbReference>
<dbReference type="GO" id="GO:0004596">
    <property type="term" value="F:protein-N-terminal amino-acid acetyltransferase activity"/>
    <property type="evidence" value="ECO:0000250"/>
    <property type="project" value="UniProtKB"/>
</dbReference>
<dbReference type="GO" id="GO:0008283">
    <property type="term" value="P:cell population proliferation"/>
    <property type="evidence" value="ECO:0000250"/>
    <property type="project" value="UniProtKB"/>
</dbReference>
<dbReference type="GO" id="GO:0007059">
    <property type="term" value="P:chromosome segregation"/>
    <property type="evidence" value="ECO:0000250"/>
    <property type="project" value="UniProtKB"/>
</dbReference>
<dbReference type="GO" id="GO:0017196">
    <property type="term" value="P:N-terminal peptidyl-methionine acetylation"/>
    <property type="evidence" value="ECO:0000250"/>
    <property type="project" value="UniProtKB"/>
</dbReference>
<dbReference type="GO" id="GO:0006474">
    <property type="term" value="P:N-terminal protein amino acid acetylation"/>
    <property type="evidence" value="ECO:0000250"/>
    <property type="project" value="UniProtKB"/>
</dbReference>
<dbReference type="GO" id="GO:0006334">
    <property type="term" value="P:nucleosome assembly"/>
    <property type="evidence" value="ECO:0000250"/>
    <property type="project" value="UniProtKB"/>
</dbReference>
<dbReference type="CDD" id="cd04301">
    <property type="entry name" value="NAT_SF"/>
    <property type="match status" value="1"/>
</dbReference>
<dbReference type="FunFam" id="3.40.630.30:FF:000028">
    <property type="entry name" value="N-alpha-acetyltransferase 60 isoform X1"/>
    <property type="match status" value="1"/>
</dbReference>
<dbReference type="Gene3D" id="3.40.630.30">
    <property type="match status" value="1"/>
</dbReference>
<dbReference type="InterPro" id="IPR016181">
    <property type="entry name" value="Acyl_CoA_acyltransferase"/>
</dbReference>
<dbReference type="InterPro" id="IPR000182">
    <property type="entry name" value="GNAT_dom"/>
</dbReference>
<dbReference type="InterPro" id="IPR045141">
    <property type="entry name" value="NAA60-like"/>
</dbReference>
<dbReference type="PANTHER" id="PTHR14744">
    <property type="entry name" value="N-ALPHA-ACETYLTRANSFERASE 60"/>
    <property type="match status" value="1"/>
</dbReference>
<dbReference type="PANTHER" id="PTHR14744:SF15">
    <property type="entry name" value="N-ALPHA-ACETYLTRANSFERASE 60"/>
    <property type="match status" value="1"/>
</dbReference>
<dbReference type="Pfam" id="PF00583">
    <property type="entry name" value="Acetyltransf_1"/>
    <property type="match status" value="1"/>
</dbReference>
<dbReference type="SUPFAM" id="SSF55729">
    <property type="entry name" value="Acyl-CoA N-acyltransferases (Nat)"/>
    <property type="match status" value="1"/>
</dbReference>
<dbReference type="PROSITE" id="PS51186">
    <property type="entry name" value="GNAT"/>
    <property type="match status" value="1"/>
</dbReference>